<organism>
    <name type="scientific">Brucella anthropi (strain ATCC 49188 / DSM 6882 / CCUG 24695 / JCM 21032 / LMG 3331 / NBRC 15819 / NCTC 12168 / Alc 37)</name>
    <name type="common">Ochrobactrum anthropi</name>
    <dbReference type="NCBI Taxonomy" id="439375"/>
    <lineage>
        <taxon>Bacteria</taxon>
        <taxon>Pseudomonadati</taxon>
        <taxon>Pseudomonadota</taxon>
        <taxon>Alphaproteobacteria</taxon>
        <taxon>Hyphomicrobiales</taxon>
        <taxon>Brucellaceae</taxon>
        <taxon>Brucella/Ochrobactrum group</taxon>
        <taxon>Brucella</taxon>
    </lineage>
</organism>
<gene>
    <name evidence="1" type="primary">hemC</name>
    <name type="ordered locus">Oant_0975</name>
</gene>
<proteinExistence type="inferred from homology"/>
<dbReference type="EC" id="2.5.1.61" evidence="1"/>
<dbReference type="EMBL" id="CP000758">
    <property type="protein sequence ID" value="ABS13696.1"/>
    <property type="molecule type" value="Genomic_DNA"/>
</dbReference>
<dbReference type="RefSeq" id="WP_012091159.1">
    <property type="nucleotide sequence ID" value="NC_009667.1"/>
</dbReference>
<dbReference type="SMR" id="A6WXJ2"/>
<dbReference type="STRING" id="439375.Oant_0975"/>
<dbReference type="KEGG" id="oan:Oant_0975"/>
<dbReference type="PATRIC" id="fig|439375.7.peg.1021"/>
<dbReference type="eggNOG" id="COG0181">
    <property type="taxonomic scope" value="Bacteria"/>
</dbReference>
<dbReference type="HOGENOM" id="CLU_019704_1_2_5"/>
<dbReference type="PhylomeDB" id="A6WXJ2"/>
<dbReference type="UniPathway" id="UPA00251">
    <property type="reaction ID" value="UER00319"/>
</dbReference>
<dbReference type="Proteomes" id="UP000002301">
    <property type="component" value="Chromosome 1"/>
</dbReference>
<dbReference type="GO" id="GO:0005737">
    <property type="term" value="C:cytoplasm"/>
    <property type="evidence" value="ECO:0007669"/>
    <property type="project" value="TreeGrafter"/>
</dbReference>
<dbReference type="GO" id="GO:0004418">
    <property type="term" value="F:hydroxymethylbilane synthase activity"/>
    <property type="evidence" value="ECO:0007669"/>
    <property type="project" value="UniProtKB-UniRule"/>
</dbReference>
<dbReference type="GO" id="GO:0006782">
    <property type="term" value="P:protoporphyrinogen IX biosynthetic process"/>
    <property type="evidence" value="ECO:0007669"/>
    <property type="project" value="UniProtKB-UniRule"/>
</dbReference>
<dbReference type="FunFam" id="3.40.190.10:FF:000004">
    <property type="entry name" value="Porphobilinogen deaminase"/>
    <property type="match status" value="1"/>
</dbReference>
<dbReference type="FunFam" id="3.40.190.10:FF:000005">
    <property type="entry name" value="Porphobilinogen deaminase"/>
    <property type="match status" value="1"/>
</dbReference>
<dbReference type="Gene3D" id="3.40.190.10">
    <property type="entry name" value="Periplasmic binding protein-like II"/>
    <property type="match status" value="2"/>
</dbReference>
<dbReference type="Gene3D" id="3.30.160.40">
    <property type="entry name" value="Porphobilinogen deaminase, C-terminal domain"/>
    <property type="match status" value="1"/>
</dbReference>
<dbReference type="HAMAP" id="MF_00260">
    <property type="entry name" value="Porphobil_deam"/>
    <property type="match status" value="1"/>
</dbReference>
<dbReference type="InterPro" id="IPR000860">
    <property type="entry name" value="HemC"/>
</dbReference>
<dbReference type="InterPro" id="IPR022419">
    <property type="entry name" value="Porphobilin_deaminase_cofac_BS"/>
</dbReference>
<dbReference type="InterPro" id="IPR022417">
    <property type="entry name" value="Porphobilin_deaminase_N"/>
</dbReference>
<dbReference type="InterPro" id="IPR022418">
    <property type="entry name" value="Porphobilinogen_deaminase_C"/>
</dbReference>
<dbReference type="InterPro" id="IPR036803">
    <property type="entry name" value="Porphobilinogen_deaminase_C_sf"/>
</dbReference>
<dbReference type="NCBIfam" id="TIGR00212">
    <property type="entry name" value="hemC"/>
    <property type="match status" value="1"/>
</dbReference>
<dbReference type="PANTHER" id="PTHR11557">
    <property type="entry name" value="PORPHOBILINOGEN DEAMINASE"/>
    <property type="match status" value="1"/>
</dbReference>
<dbReference type="PANTHER" id="PTHR11557:SF0">
    <property type="entry name" value="PORPHOBILINOGEN DEAMINASE"/>
    <property type="match status" value="1"/>
</dbReference>
<dbReference type="Pfam" id="PF01379">
    <property type="entry name" value="Porphobil_deam"/>
    <property type="match status" value="1"/>
</dbReference>
<dbReference type="Pfam" id="PF03900">
    <property type="entry name" value="Porphobil_deamC"/>
    <property type="match status" value="1"/>
</dbReference>
<dbReference type="PIRSF" id="PIRSF001438">
    <property type="entry name" value="4pyrrol_synth_OHMeBilane_synth"/>
    <property type="match status" value="1"/>
</dbReference>
<dbReference type="PRINTS" id="PR00151">
    <property type="entry name" value="PORPHBDMNASE"/>
</dbReference>
<dbReference type="SUPFAM" id="SSF53850">
    <property type="entry name" value="Periplasmic binding protein-like II"/>
    <property type="match status" value="1"/>
</dbReference>
<dbReference type="SUPFAM" id="SSF54782">
    <property type="entry name" value="Porphobilinogen deaminase (hydroxymethylbilane synthase), C-terminal domain"/>
    <property type="match status" value="1"/>
</dbReference>
<dbReference type="PROSITE" id="PS00533">
    <property type="entry name" value="PORPHOBILINOGEN_DEAM"/>
    <property type="match status" value="1"/>
</dbReference>
<keyword id="KW-0627">Porphyrin biosynthesis</keyword>
<keyword id="KW-1185">Reference proteome</keyword>
<keyword id="KW-0808">Transferase</keyword>
<comment type="function">
    <text evidence="1">Tetrapolymerization of the monopyrrole PBG into the hydroxymethylbilane pre-uroporphyrinogen in several discrete steps.</text>
</comment>
<comment type="catalytic activity">
    <reaction evidence="1">
        <text>4 porphobilinogen + H2O = hydroxymethylbilane + 4 NH4(+)</text>
        <dbReference type="Rhea" id="RHEA:13185"/>
        <dbReference type="ChEBI" id="CHEBI:15377"/>
        <dbReference type="ChEBI" id="CHEBI:28938"/>
        <dbReference type="ChEBI" id="CHEBI:57845"/>
        <dbReference type="ChEBI" id="CHEBI:58126"/>
        <dbReference type="EC" id="2.5.1.61"/>
    </reaction>
</comment>
<comment type="cofactor">
    <cofactor evidence="1">
        <name>dipyrromethane</name>
        <dbReference type="ChEBI" id="CHEBI:60342"/>
    </cofactor>
    <text evidence="1">Binds 1 dipyrromethane group covalently.</text>
</comment>
<comment type="pathway">
    <text evidence="1">Porphyrin-containing compound metabolism; protoporphyrin-IX biosynthesis; coproporphyrinogen-III from 5-aminolevulinate: step 2/4.</text>
</comment>
<comment type="subunit">
    <text evidence="1">Monomer.</text>
</comment>
<comment type="miscellaneous">
    <text evidence="1">The porphobilinogen subunits are added to the dipyrromethane group.</text>
</comment>
<comment type="similarity">
    <text evidence="1">Belongs to the HMBS family.</text>
</comment>
<reference key="1">
    <citation type="journal article" date="2011" name="J. Bacteriol.">
        <title>Genome of Ochrobactrum anthropi ATCC 49188 T, a versatile opportunistic pathogen and symbiont of several eukaryotic hosts.</title>
        <authorList>
            <person name="Chain P.S."/>
            <person name="Lang D.M."/>
            <person name="Comerci D.J."/>
            <person name="Malfatti S.A."/>
            <person name="Vergez L.M."/>
            <person name="Shin M."/>
            <person name="Ugalde R.A."/>
            <person name="Garcia E."/>
            <person name="Tolmasky M.E."/>
        </authorList>
    </citation>
    <scope>NUCLEOTIDE SEQUENCE [LARGE SCALE GENOMIC DNA]</scope>
    <source>
        <strain>ATCC 49188 / DSM 6882 / CCUG 24695 / JCM 21032 / LMG 3331 / NBRC 15819 / NCTC 12168 / Alc 37</strain>
    </source>
</reference>
<evidence type="ECO:0000255" key="1">
    <source>
        <dbReference type="HAMAP-Rule" id="MF_00260"/>
    </source>
</evidence>
<sequence length="314" mass="33568">MQTASLKNGTLKIGTRGSKLALAQAYETRRRLMEAHGLPEEAIEIIPMSTAGDRIQDRALSEIGGKGLFTEEIEQALTDGRIDLAVHSTKDMPTVLPDGLHLSVFLEREDPRDAFIGRTASRLLDLPQGATVGSSSLRRQALIRRLRPDIQVVIFRGNVDTRLRKLEAGEVDGTFLACAGLRRLGLGDVITDLADPESFPPAPGQGAIGIETRIGDTRIDTLLAPLAHRETGIALACERAFLAALDGSCRTPIAGLATVNGDTVSFHGMILKPDGSEAHEIKTEGPASNAAAIGTEAAEHLRAKAGPQFFEGWE</sequence>
<name>HEM3_BRUA4</name>
<feature type="chain" id="PRO_1000047756" description="Porphobilinogen deaminase">
    <location>
        <begin position="1"/>
        <end position="314"/>
    </location>
</feature>
<feature type="modified residue" description="S-(dipyrrolylmethanemethyl)cysteine" evidence="1">
    <location>
        <position position="249"/>
    </location>
</feature>
<accession>A6WXJ2</accession>
<protein>
    <recommendedName>
        <fullName evidence="1">Porphobilinogen deaminase</fullName>
        <shortName evidence="1">PBG</shortName>
        <ecNumber evidence="1">2.5.1.61</ecNumber>
    </recommendedName>
    <alternativeName>
        <fullName evidence="1">Hydroxymethylbilane synthase</fullName>
        <shortName evidence="1">HMBS</shortName>
    </alternativeName>
    <alternativeName>
        <fullName evidence="1">Pre-uroporphyrinogen synthase</fullName>
    </alternativeName>
</protein>